<gene>
    <name evidence="1" type="primary">rpsO</name>
    <name type="ordered locus">RHA1_ro06654</name>
</gene>
<protein>
    <recommendedName>
        <fullName evidence="1">Small ribosomal subunit protein uS15</fullName>
    </recommendedName>
    <alternativeName>
        <fullName evidence="3">30S ribosomal protein S15</fullName>
    </alternativeName>
</protein>
<reference key="1">
    <citation type="journal article" date="2006" name="Proc. Natl. Acad. Sci. U.S.A.">
        <title>The complete genome of Rhodococcus sp. RHA1 provides insights into a catabolic powerhouse.</title>
        <authorList>
            <person name="McLeod M.P."/>
            <person name="Warren R.L."/>
            <person name="Hsiao W.W.L."/>
            <person name="Araki N."/>
            <person name="Myhre M."/>
            <person name="Fernandes C."/>
            <person name="Miyazawa D."/>
            <person name="Wong W."/>
            <person name="Lillquist A.L."/>
            <person name="Wang D."/>
            <person name="Dosanjh M."/>
            <person name="Hara H."/>
            <person name="Petrescu A."/>
            <person name="Morin R.D."/>
            <person name="Yang G."/>
            <person name="Stott J.M."/>
            <person name="Schein J.E."/>
            <person name="Shin H."/>
            <person name="Smailus D."/>
            <person name="Siddiqui A.S."/>
            <person name="Marra M.A."/>
            <person name="Jones S.J.M."/>
            <person name="Holt R."/>
            <person name="Brinkman F.S.L."/>
            <person name="Miyauchi K."/>
            <person name="Fukuda M."/>
            <person name="Davies J.E."/>
            <person name="Mohn W.W."/>
            <person name="Eltis L.D."/>
        </authorList>
    </citation>
    <scope>NUCLEOTIDE SEQUENCE [LARGE SCALE GENOMIC DNA]</scope>
    <source>
        <strain>RHA1</strain>
    </source>
</reference>
<feature type="chain" id="PRO_0000255520" description="Small ribosomal subunit protein uS15">
    <location>
        <begin position="1"/>
        <end position="89"/>
    </location>
</feature>
<feature type="region of interest" description="Disordered" evidence="2">
    <location>
        <begin position="1"/>
        <end position="24"/>
    </location>
</feature>
<feature type="compositionally biased region" description="Basic and acidic residues" evidence="2">
    <location>
        <begin position="1"/>
        <end position="21"/>
    </location>
</feature>
<proteinExistence type="inferred from homology"/>
<keyword id="KW-0687">Ribonucleoprotein</keyword>
<keyword id="KW-0689">Ribosomal protein</keyword>
<keyword id="KW-0694">RNA-binding</keyword>
<keyword id="KW-0699">rRNA-binding</keyword>
<sequence>MALTTEEKKQVLSEYGLHETDTGSPEAQVAMLTKRIVDLTEHLKMHKHDHHSRRGLLLLVGRRRRLLKYVQKVDIERYRSLIERLGLRR</sequence>
<evidence type="ECO:0000255" key="1">
    <source>
        <dbReference type="HAMAP-Rule" id="MF_01343"/>
    </source>
</evidence>
<evidence type="ECO:0000256" key="2">
    <source>
        <dbReference type="SAM" id="MobiDB-lite"/>
    </source>
</evidence>
<evidence type="ECO:0000305" key="3"/>
<name>RS15_RHOJR</name>
<comment type="function">
    <text evidence="1">One of the primary rRNA binding proteins, it binds directly to 16S rRNA where it helps nucleate assembly of the platform of the 30S subunit by binding and bridging several RNA helices of the 16S rRNA.</text>
</comment>
<comment type="function">
    <text evidence="1">Forms an intersubunit bridge (bridge B4) with the 23S rRNA of the 50S subunit in the ribosome.</text>
</comment>
<comment type="subunit">
    <text evidence="1">Part of the 30S ribosomal subunit. Forms a bridge to the 50S subunit in the 70S ribosome, contacting the 23S rRNA.</text>
</comment>
<comment type="similarity">
    <text evidence="1">Belongs to the universal ribosomal protein uS15 family.</text>
</comment>
<accession>Q0S209</accession>
<organism>
    <name type="scientific">Rhodococcus jostii (strain RHA1)</name>
    <dbReference type="NCBI Taxonomy" id="101510"/>
    <lineage>
        <taxon>Bacteria</taxon>
        <taxon>Bacillati</taxon>
        <taxon>Actinomycetota</taxon>
        <taxon>Actinomycetes</taxon>
        <taxon>Mycobacteriales</taxon>
        <taxon>Nocardiaceae</taxon>
        <taxon>Rhodococcus</taxon>
    </lineage>
</organism>
<dbReference type="EMBL" id="CP000431">
    <property type="protein sequence ID" value="ABG98427.1"/>
    <property type="molecule type" value="Genomic_DNA"/>
</dbReference>
<dbReference type="RefSeq" id="WP_005240682.1">
    <property type="nucleotide sequence ID" value="NC_008268.1"/>
</dbReference>
<dbReference type="SMR" id="Q0S209"/>
<dbReference type="GeneID" id="69891035"/>
<dbReference type="KEGG" id="rha:RHA1_ro06654"/>
<dbReference type="eggNOG" id="COG0184">
    <property type="taxonomic scope" value="Bacteria"/>
</dbReference>
<dbReference type="HOGENOM" id="CLU_148518_0_0_11"/>
<dbReference type="OrthoDB" id="9799262at2"/>
<dbReference type="Proteomes" id="UP000008710">
    <property type="component" value="Chromosome"/>
</dbReference>
<dbReference type="GO" id="GO:0022627">
    <property type="term" value="C:cytosolic small ribosomal subunit"/>
    <property type="evidence" value="ECO:0007669"/>
    <property type="project" value="TreeGrafter"/>
</dbReference>
<dbReference type="GO" id="GO:0019843">
    <property type="term" value="F:rRNA binding"/>
    <property type="evidence" value="ECO:0007669"/>
    <property type="project" value="UniProtKB-UniRule"/>
</dbReference>
<dbReference type="GO" id="GO:0003735">
    <property type="term" value="F:structural constituent of ribosome"/>
    <property type="evidence" value="ECO:0007669"/>
    <property type="project" value="InterPro"/>
</dbReference>
<dbReference type="GO" id="GO:0006412">
    <property type="term" value="P:translation"/>
    <property type="evidence" value="ECO:0007669"/>
    <property type="project" value="UniProtKB-UniRule"/>
</dbReference>
<dbReference type="CDD" id="cd00353">
    <property type="entry name" value="Ribosomal_S15p_S13e"/>
    <property type="match status" value="1"/>
</dbReference>
<dbReference type="FunFam" id="1.10.287.10:FF:000002">
    <property type="entry name" value="30S ribosomal protein S15"/>
    <property type="match status" value="1"/>
</dbReference>
<dbReference type="Gene3D" id="6.10.250.3130">
    <property type="match status" value="1"/>
</dbReference>
<dbReference type="Gene3D" id="1.10.287.10">
    <property type="entry name" value="S15/NS1, RNA-binding"/>
    <property type="match status" value="1"/>
</dbReference>
<dbReference type="HAMAP" id="MF_01343_B">
    <property type="entry name" value="Ribosomal_uS15_B"/>
    <property type="match status" value="1"/>
</dbReference>
<dbReference type="InterPro" id="IPR000589">
    <property type="entry name" value="Ribosomal_uS15"/>
</dbReference>
<dbReference type="InterPro" id="IPR005290">
    <property type="entry name" value="Ribosomal_uS15_bac-type"/>
</dbReference>
<dbReference type="InterPro" id="IPR009068">
    <property type="entry name" value="uS15_NS1_RNA-bd_sf"/>
</dbReference>
<dbReference type="NCBIfam" id="TIGR00952">
    <property type="entry name" value="S15_bact"/>
    <property type="match status" value="1"/>
</dbReference>
<dbReference type="PANTHER" id="PTHR23321">
    <property type="entry name" value="RIBOSOMAL PROTEIN S15, BACTERIAL AND ORGANELLAR"/>
    <property type="match status" value="1"/>
</dbReference>
<dbReference type="PANTHER" id="PTHR23321:SF26">
    <property type="entry name" value="SMALL RIBOSOMAL SUBUNIT PROTEIN US15M"/>
    <property type="match status" value="1"/>
</dbReference>
<dbReference type="Pfam" id="PF00312">
    <property type="entry name" value="Ribosomal_S15"/>
    <property type="match status" value="1"/>
</dbReference>
<dbReference type="SMART" id="SM01387">
    <property type="entry name" value="Ribosomal_S15"/>
    <property type="match status" value="1"/>
</dbReference>
<dbReference type="SUPFAM" id="SSF47060">
    <property type="entry name" value="S15/NS1 RNA-binding domain"/>
    <property type="match status" value="1"/>
</dbReference>
<dbReference type="PROSITE" id="PS00362">
    <property type="entry name" value="RIBOSOMAL_S15"/>
    <property type="match status" value="1"/>
</dbReference>